<feature type="chain" id="PRO_0000253171" description="Putative membrane protein insertion efficiency factor">
    <location>
        <begin position="1"/>
        <end position="85"/>
    </location>
</feature>
<gene>
    <name type="ordered locus">SG2430</name>
</gene>
<name>YIDD_SODGM</name>
<proteinExistence type="inferred from homology"/>
<protein>
    <recommendedName>
        <fullName evidence="1">Putative membrane protein insertion efficiency factor</fullName>
    </recommendedName>
</protein>
<keyword id="KW-0997">Cell inner membrane</keyword>
<keyword id="KW-1003">Cell membrane</keyword>
<keyword id="KW-0472">Membrane</keyword>
<comment type="function">
    <text evidence="1">Could be involved in insertion of integral membrane proteins into the membrane.</text>
</comment>
<comment type="subcellular location">
    <subcellularLocation>
        <location evidence="1">Cell inner membrane</location>
        <topology evidence="1">Peripheral membrane protein</topology>
        <orientation evidence="1">Cytoplasmic side</orientation>
    </subcellularLocation>
</comment>
<comment type="similarity">
    <text evidence="1">Belongs to the UPF0161 family.</text>
</comment>
<sequence>MAPPLSPVSKLLIGLIRGYQLVISPLLGPHCRFRPTCSQYGIEAIRRFGMLKGSWLTLKRVLKCHPLNPGGEDPVPPKNFDNREH</sequence>
<accession>Q2NQ70</accession>
<reference key="1">
    <citation type="journal article" date="2006" name="Genome Res.">
        <title>Massive genome erosion and functional adaptations provide insights into the symbiotic lifestyle of Sodalis glossinidius in the tsetse host.</title>
        <authorList>
            <person name="Toh H."/>
            <person name="Weiss B.L."/>
            <person name="Perkin S.A.H."/>
            <person name="Yamashita A."/>
            <person name="Oshima K."/>
            <person name="Hattori M."/>
            <person name="Aksoy S."/>
        </authorList>
    </citation>
    <scope>NUCLEOTIDE SEQUENCE [LARGE SCALE GENOMIC DNA]</scope>
    <source>
        <strain>morsitans</strain>
    </source>
</reference>
<dbReference type="EMBL" id="AP008232">
    <property type="protein sequence ID" value="BAE75705.1"/>
    <property type="molecule type" value="Genomic_DNA"/>
</dbReference>
<dbReference type="RefSeq" id="WP_011412235.1">
    <property type="nucleotide sequence ID" value="NC_007712.1"/>
</dbReference>
<dbReference type="STRING" id="343509.SG2430"/>
<dbReference type="KEGG" id="sgl:SG2430"/>
<dbReference type="eggNOG" id="COG0759">
    <property type="taxonomic scope" value="Bacteria"/>
</dbReference>
<dbReference type="HOGENOM" id="CLU_144811_5_2_6"/>
<dbReference type="OrthoDB" id="9801753at2"/>
<dbReference type="BioCyc" id="SGLO343509:SGP1_RS28640-MONOMER"/>
<dbReference type="Proteomes" id="UP000001932">
    <property type="component" value="Chromosome"/>
</dbReference>
<dbReference type="GO" id="GO:0005886">
    <property type="term" value="C:plasma membrane"/>
    <property type="evidence" value="ECO:0007669"/>
    <property type="project" value="UniProtKB-SubCell"/>
</dbReference>
<dbReference type="HAMAP" id="MF_00386">
    <property type="entry name" value="UPF0161_YidD"/>
    <property type="match status" value="1"/>
</dbReference>
<dbReference type="InterPro" id="IPR002696">
    <property type="entry name" value="Membr_insert_effic_factor_YidD"/>
</dbReference>
<dbReference type="NCBIfam" id="TIGR00278">
    <property type="entry name" value="membrane protein insertion efficiency factor YidD"/>
    <property type="match status" value="1"/>
</dbReference>
<dbReference type="PANTHER" id="PTHR33383">
    <property type="entry name" value="MEMBRANE PROTEIN INSERTION EFFICIENCY FACTOR-RELATED"/>
    <property type="match status" value="1"/>
</dbReference>
<dbReference type="PANTHER" id="PTHR33383:SF1">
    <property type="entry name" value="MEMBRANE PROTEIN INSERTION EFFICIENCY FACTOR-RELATED"/>
    <property type="match status" value="1"/>
</dbReference>
<dbReference type="Pfam" id="PF01809">
    <property type="entry name" value="YidD"/>
    <property type="match status" value="1"/>
</dbReference>
<dbReference type="SMART" id="SM01234">
    <property type="entry name" value="Haemolytic"/>
    <property type="match status" value="1"/>
</dbReference>
<organism>
    <name type="scientific">Sodalis glossinidius (strain morsitans)</name>
    <dbReference type="NCBI Taxonomy" id="343509"/>
    <lineage>
        <taxon>Bacteria</taxon>
        <taxon>Pseudomonadati</taxon>
        <taxon>Pseudomonadota</taxon>
        <taxon>Gammaproteobacteria</taxon>
        <taxon>Enterobacterales</taxon>
        <taxon>Bruguierivoracaceae</taxon>
        <taxon>Sodalis</taxon>
    </lineage>
</organism>
<evidence type="ECO:0000255" key="1">
    <source>
        <dbReference type="HAMAP-Rule" id="MF_00386"/>
    </source>
</evidence>